<gene>
    <name evidence="1" type="primary">fusA1</name>
    <name type="ordered locus">BPP0026</name>
</gene>
<keyword id="KW-0963">Cytoplasm</keyword>
<keyword id="KW-0251">Elongation factor</keyword>
<keyword id="KW-0342">GTP-binding</keyword>
<keyword id="KW-0547">Nucleotide-binding</keyword>
<keyword id="KW-0648">Protein biosynthesis</keyword>
<protein>
    <recommendedName>
        <fullName evidence="1">Elongation factor G 1</fullName>
        <shortName evidence="1">EF-G 1</shortName>
    </recommendedName>
</protein>
<reference key="1">
    <citation type="journal article" date="2003" name="Nat. Genet.">
        <title>Comparative analysis of the genome sequences of Bordetella pertussis, Bordetella parapertussis and Bordetella bronchiseptica.</title>
        <authorList>
            <person name="Parkhill J."/>
            <person name="Sebaihia M."/>
            <person name="Preston A."/>
            <person name="Murphy L.D."/>
            <person name="Thomson N.R."/>
            <person name="Harris D.E."/>
            <person name="Holden M.T.G."/>
            <person name="Churcher C.M."/>
            <person name="Bentley S.D."/>
            <person name="Mungall K.L."/>
            <person name="Cerdeno-Tarraga A.-M."/>
            <person name="Temple L."/>
            <person name="James K.D."/>
            <person name="Harris B."/>
            <person name="Quail M.A."/>
            <person name="Achtman M."/>
            <person name="Atkin R."/>
            <person name="Baker S."/>
            <person name="Basham D."/>
            <person name="Bason N."/>
            <person name="Cherevach I."/>
            <person name="Chillingworth T."/>
            <person name="Collins M."/>
            <person name="Cronin A."/>
            <person name="Davis P."/>
            <person name="Doggett J."/>
            <person name="Feltwell T."/>
            <person name="Goble A."/>
            <person name="Hamlin N."/>
            <person name="Hauser H."/>
            <person name="Holroyd S."/>
            <person name="Jagels K."/>
            <person name="Leather S."/>
            <person name="Moule S."/>
            <person name="Norberczak H."/>
            <person name="O'Neil S."/>
            <person name="Ormond D."/>
            <person name="Price C."/>
            <person name="Rabbinowitsch E."/>
            <person name="Rutter S."/>
            <person name="Sanders M."/>
            <person name="Saunders D."/>
            <person name="Seeger K."/>
            <person name="Sharp S."/>
            <person name="Simmonds M."/>
            <person name="Skelton J."/>
            <person name="Squares R."/>
            <person name="Squares S."/>
            <person name="Stevens K."/>
            <person name="Unwin L."/>
            <person name="Whitehead S."/>
            <person name="Barrell B.G."/>
            <person name="Maskell D.J."/>
        </authorList>
    </citation>
    <scope>NUCLEOTIDE SEQUENCE [LARGE SCALE GENOMIC DNA]</scope>
    <source>
        <strain>12822 / ATCC BAA-587 / NCTC 13253</strain>
    </source>
</reference>
<name>EFG1_BORPA</name>
<sequence>MARKTPIERYRNIGISAHIDAGKTTTTERILFYTGVNHKLGETHDGSATMDWMEQEQERGITITSAATTAFWRGMAGNYPEYRINIIDTPGHVDFTIEVERSMRVLDGACMVYCAVGGVQPQSETVWRQANKYGVPRLAFVNKMDRTGANFFKVYDQLKTRLRANPVPIVIPIGAEDSFTGVVDLVKMKAIIWDEASQGTKFEYGDIPAELEGTANEWREKLVEAAAESSEELMNKYLETGSLDEDDINVALRQRTIAGEIQPMLCGTAFKNKGVQRMLDAVIDYLPSPADIPPVDGQDDDGNPIKRSADDAEKFSALAFKLMSDPFVGQLTFVRVYSGVLKSGDTVYNPIKGKKERIGRLLQMHANNREEIKEVLAGDIAAVVGLKDVTTGETLCDIDSHILLERMEFPEPVISQAVEPKSKADQEKMGLALSRLAQEDPSFRVRSDEESGQTIISGMGELHLEILVDRMRREFGVEANVGKPQVAYRETIRKNCDEVEGKFVKQSGGRGQYGHVVLKLEPLPPGGGYEFVDAIKGGVVPREYIPAVDKGIQETLPAGILAGYPVVDVKATLFFGSYHDVDSNENAFKMAASMAFKEGMRRASPVLLEPMMAVEVETPEDYAGTVMGDLSSRRGMVQGMDDIVGGGKTIKAEVPLAEMFGYATNLRSLTQGRATYTMEFKHYAEAPKNVADEVIAARGK</sequence>
<evidence type="ECO:0000255" key="1">
    <source>
        <dbReference type="HAMAP-Rule" id="MF_00054"/>
    </source>
</evidence>
<feature type="chain" id="PRO_0000091084" description="Elongation factor G 1">
    <location>
        <begin position="1"/>
        <end position="700"/>
    </location>
</feature>
<feature type="domain" description="tr-type G">
    <location>
        <begin position="8"/>
        <end position="290"/>
    </location>
</feature>
<feature type="binding site" evidence="1">
    <location>
        <begin position="17"/>
        <end position="24"/>
    </location>
    <ligand>
        <name>GTP</name>
        <dbReference type="ChEBI" id="CHEBI:37565"/>
    </ligand>
</feature>
<feature type="binding site" evidence="1">
    <location>
        <begin position="88"/>
        <end position="92"/>
    </location>
    <ligand>
        <name>GTP</name>
        <dbReference type="ChEBI" id="CHEBI:37565"/>
    </ligand>
</feature>
<feature type="binding site" evidence="1">
    <location>
        <begin position="142"/>
        <end position="145"/>
    </location>
    <ligand>
        <name>GTP</name>
        <dbReference type="ChEBI" id="CHEBI:37565"/>
    </ligand>
</feature>
<dbReference type="EMBL" id="BX640423">
    <property type="protein sequence ID" value="CAE39767.1"/>
    <property type="molecule type" value="Genomic_DNA"/>
</dbReference>
<dbReference type="RefSeq" id="WP_010927267.1">
    <property type="nucleotide sequence ID" value="NC_002928.3"/>
</dbReference>
<dbReference type="SMR" id="Q7W2F8"/>
<dbReference type="GeneID" id="93206255"/>
<dbReference type="KEGG" id="bpa:BPP0026"/>
<dbReference type="HOGENOM" id="CLU_002794_4_1_4"/>
<dbReference type="Proteomes" id="UP000001421">
    <property type="component" value="Chromosome"/>
</dbReference>
<dbReference type="GO" id="GO:0005737">
    <property type="term" value="C:cytoplasm"/>
    <property type="evidence" value="ECO:0007669"/>
    <property type="project" value="UniProtKB-SubCell"/>
</dbReference>
<dbReference type="GO" id="GO:0005525">
    <property type="term" value="F:GTP binding"/>
    <property type="evidence" value="ECO:0007669"/>
    <property type="project" value="UniProtKB-UniRule"/>
</dbReference>
<dbReference type="GO" id="GO:0003924">
    <property type="term" value="F:GTPase activity"/>
    <property type="evidence" value="ECO:0007669"/>
    <property type="project" value="InterPro"/>
</dbReference>
<dbReference type="GO" id="GO:0097216">
    <property type="term" value="F:guanosine tetraphosphate binding"/>
    <property type="evidence" value="ECO:0007669"/>
    <property type="project" value="UniProtKB-ARBA"/>
</dbReference>
<dbReference type="GO" id="GO:0003746">
    <property type="term" value="F:translation elongation factor activity"/>
    <property type="evidence" value="ECO:0007669"/>
    <property type="project" value="UniProtKB-UniRule"/>
</dbReference>
<dbReference type="GO" id="GO:0032790">
    <property type="term" value="P:ribosome disassembly"/>
    <property type="evidence" value="ECO:0007669"/>
    <property type="project" value="TreeGrafter"/>
</dbReference>
<dbReference type="CDD" id="cd01886">
    <property type="entry name" value="EF-G"/>
    <property type="match status" value="1"/>
</dbReference>
<dbReference type="CDD" id="cd16262">
    <property type="entry name" value="EFG_III"/>
    <property type="match status" value="1"/>
</dbReference>
<dbReference type="CDD" id="cd01434">
    <property type="entry name" value="EFG_mtEFG1_IV"/>
    <property type="match status" value="1"/>
</dbReference>
<dbReference type="CDD" id="cd03713">
    <property type="entry name" value="EFG_mtEFG_C"/>
    <property type="match status" value="1"/>
</dbReference>
<dbReference type="CDD" id="cd04088">
    <property type="entry name" value="EFG_mtEFG_II"/>
    <property type="match status" value="1"/>
</dbReference>
<dbReference type="FunFam" id="2.40.30.10:FF:000006">
    <property type="entry name" value="Elongation factor G"/>
    <property type="match status" value="1"/>
</dbReference>
<dbReference type="FunFam" id="3.30.230.10:FF:000003">
    <property type="entry name" value="Elongation factor G"/>
    <property type="match status" value="1"/>
</dbReference>
<dbReference type="FunFam" id="3.30.70.240:FF:000001">
    <property type="entry name" value="Elongation factor G"/>
    <property type="match status" value="1"/>
</dbReference>
<dbReference type="FunFam" id="3.30.70.870:FF:000001">
    <property type="entry name" value="Elongation factor G"/>
    <property type="match status" value="1"/>
</dbReference>
<dbReference type="FunFam" id="3.40.50.300:FF:000029">
    <property type="entry name" value="Elongation factor G"/>
    <property type="match status" value="1"/>
</dbReference>
<dbReference type="Gene3D" id="3.30.230.10">
    <property type="match status" value="1"/>
</dbReference>
<dbReference type="Gene3D" id="3.30.70.240">
    <property type="match status" value="1"/>
</dbReference>
<dbReference type="Gene3D" id="3.30.70.870">
    <property type="entry name" value="Elongation Factor G (Translational Gtpase), domain 3"/>
    <property type="match status" value="1"/>
</dbReference>
<dbReference type="Gene3D" id="3.40.50.300">
    <property type="entry name" value="P-loop containing nucleotide triphosphate hydrolases"/>
    <property type="match status" value="1"/>
</dbReference>
<dbReference type="Gene3D" id="2.40.30.10">
    <property type="entry name" value="Translation factors"/>
    <property type="match status" value="1"/>
</dbReference>
<dbReference type="HAMAP" id="MF_00054_B">
    <property type="entry name" value="EF_G_EF_2_B"/>
    <property type="match status" value="1"/>
</dbReference>
<dbReference type="InterPro" id="IPR041095">
    <property type="entry name" value="EFG_II"/>
</dbReference>
<dbReference type="InterPro" id="IPR009022">
    <property type="entry name" value="EFG_III"/>
</dbReference>
<dbReference type="InterPro" id="IPR035647">
    <property type="entry name" value="EFG_III/V"/>
</dbReference>
<dbReference type="InterPro" id="IPR047872">
    <property type="entry name" value="EFG_IV"/>
</dbReference>
<dbReference type="InterPro" id="IPR035649">
    <property type="entry name" value="EFG_V"/>
</dbReference>
<dbReference type="InterPro" id="IPR000640">
    <property type="entry name" value="EFG_V-like"/>
</dbReference>
<dbReference type="InterPro" id="IPR004161">
    <property type="entry name" value="EFTu-like_2"/>
</dbReference>
<dbReference type="InterPro" id="IPR031157">
    <property type="entry name" value="G_TR_CS"/>
</dbReference>
<dbReference type="InterPro" id="IPR027417">
    <property type="entry name" value="P-loop_NTPase"/>
</dbReference>
<dbReference type="InterPro" id="IPR020568">
    <property type="entry name" value="Ribosomal_Su5_D2-typ_SF"/>
</dbReference>
<dbReference type="InterPro" id="IPR014721">
    <property type="entry name" value="Ribsml_uS5_D2-typ_fold_subgr"/>
</dbReference>
<dbReference type="InterPro" id="IPR005225">
    <property type="entry name" value="Small_GTP-bd"/>
</dbReference>
<dbReference type="InterPro" id="IPR000795">
    <property type="entry name" value="T_Tr_GTP-bd_dom"/>
</dbReference>
<dbReference type="InterPro" id="IPR009000">
    <property type="entry name" value="Transl_B-barrel_sf"/>
</dbReference>
<dbReference type="InterPro" id="IPR004540">
    <property type="entry name" value="Transl_elong_EFG/EF2"/>
</dbReference>
<dbReference type="InterPro" id="IPR005517">
    <property type="entry name" value="Transl_elong_EFG/EF2_IV"/>
</dbReference>
<dbReference type="NCBIfam" id="TIGR00484">
    <property type="entry name" value="EF-G"/>
    <property type="match status" value="1"/>
</dbReference>
<dbReference type="NCBIfam" id="NF009381">
    <property type="entry name" value="PRK12740.1-5"/>
    <property type="match status" value="1"/>
</dbReference>
<dbReference type="NCBIfam" id="TIGR00231">
    <property type="entry name" value="small_GTP"/>
    <property type="match status" value="1"/>
</dbReference>
<dbReference type="PANTHER" id="PTHR43261:SF1">
    <property type="entry name" value="RIBOSOME-RELEASING FACTOR 2, MITOCHONDRIAL"/>
    <property type="match status" value="1"/>
</dbReference>
<dbReference type="PANTHER" id="PTHR43261">
    <property type="entry name" value="TRANSLATION ELONGATION FACTOR G-RELATED"/>
    <property type="match status" value="1"/>
</dbReference>
<dbReference type="Pfam" id="PF00679">
    <property type="entry name" value="EFG_C"/>
    <property type="match status" value="1"/>
</dbReference>
<dbReference type="Pfam" id="PF14492">
    <property type="entry name" value="EFG_III"/>
    <property type="match status" value="1"/>
</dbReference>
<dbReference type="Pfam" id="PF03764">
    <property type="entry name" value="EFG_IV"/>
    <property type="match status" value="1"/>
</dbReference>
<dbReference type="Pfam" id="PF00009">
    <property type="entry name" value="GTP_EFTU"/>
    <property type="match status" value="1"/>
</dbReference>
<dbReference type="Pfam" id="PF03144">
    <property type="entry name" value="GTP_EFTU_D2"/>
    <property type="match status" value="1"/>
</dbReference>
<dbReference type="PRINTS" id="PR00315">
    <property type="entry name" value="ELONGATNFCT"/>
</dbReference>
<dbReference type="SMART" id="SM00838">
    <property type="entry name" value="EFG_C"/>
    <property type="match status" value="1"/>
</dbReference>
<dbReference type="SMART" id="SM00889">
    <property type="entry name" value="EFG_IV"/>
    <property type="match status" value="1"/>
</dbReference>
<dbReference type="SUPFAM" id="SSF54980">
    <property type="entry name" value="EF-G C-terminal domain-like"/>
    <property type="match status" value="2"/>
</dbReference>
<dbReference type="SUPFAM" id="SSF52540">
    <property type="entry name" value="P-loop containing nucleoside triphosphate hydrolases"/>
    <property type="match status" value="1"/>
</dbReference>
<dbReference type="SUPFAM" id="SSF54211">
    <property type="entry name" value="Ribosomal protein S5 domain 2-like"/>
    <property type="match status" value="1"/>
</dbReference>
<dbReference type="SUPFAM" id="SSF50447">
    <property type="entry name" value="Translation proteins"/>
    <property type="match status" value="1"/>
</dbReference>
<dbReference type="PROSITE" id="PS00301">
    <property type="entry name" value="G_TR_1"/>
    <property type="match status" value="1"/>
</dbReference>
<dbReference type="PROSITE" id="PS51722">
    <property type="entry name" value="G_TR_2"/>
    <property type="match status" value="1"/>
</dbReference>
<accession>Q7W2F8</accession>
<organism>
    <name type="scientific">Bordetella parapertussis (strain 12822 / ATCC BAA-587 / NCTC 13253)</name>
    <dbReference type="NCBI Taxonomy" id="257311"/>
    <lineage>
        <taxon>Bacteria</taxon>
        <taxon>Pseudomonadati</taxon>
        <taxon>Pseudomonadota</taxon>
        <taxon>Betaproteobacteria</taxon>
        <taxon>Burkholderiales</taxon>
        <taxon>Alcaligenaceae</taxon>
        <taxon>Bordetella</taxon>
    </lineage>
</organism>
<comment type="function">
    <text evidence="1">Catalyzes the GTP-dependent ribosomal translocation step during translation elongation. During this step, the ribosome changes from the pre-translocational (PRE) to the post-translocational (POST) state as the newly formed A-site-bound peptidyl-tRNA and P-site-bound deacylated tRNA move to the P and E sites, respectively. Catalyzes the coordinated movement of the two tRNA molecules, the mRNA and conformational changes in the ribosome.</text>
</comment>
<comment type="subcellular location">
    <subcellularLocation>
        <location evidence="1">Cytoplasm</location>
    </subcellularLocation>
</comment>
<comment type="similarity">
    <text evidence="1">Belongs to the TRAFAC class translation factor GTPase superfamily. Classic translation factor GTPase family. EF-G/EF-2 subfamily.</text>
</comment>
<proteinExistence type="inferred from homology"/>